<proteinExistence type="evidence at protein level"/>
<feature type="signal peptide" evidence="1">
    <location>
        <begin position="1"/>
        <end position="19"/>
    </location>
</feature>
<feature type="chain" id="PRO_5000095342" description="Icarapin">
    <location>
        <begin position="20"/>
        <end position="223"/>
    </location>
</feature>
<feature type="region of interest" description="Disordered" evidence="2">
    <location>
        <begin position="186"/>
        <end position="223"/>
    </location>
</feature>
<feature type="compositionally biased region" description="Polar residues" evidence="2">
    <location>
        <begin position="186"/>
        <end position="203"/>
    </location>
</feature>
<feature type="glycosylation site" description="N-linked (GlcNAc...) asparagine" evidence="1">
    <location>
        <position position="126"/>
    </location>
</feature>
<feature type="glycosylation site" description="N-linked (GlcNAc...) asparagine" evidence="1">
    <location>
        <position position="142"/>
    </location>
</feature>
<feature type="glycosylation site" description="N-linked (GlcNAc...) asparagine" evidence="1">
    <location>
        <position position="168"/>
    </location>
</feature>
<feature type="glycosylation site" description="N-linked (GlcNAc...) asparagine" evidence="1">
    <location>
        <position position="193"/>
    </location>
</feature>
<feature type="splice variant" id="VSP_040198" description="In isoform variant 2." evidence="5">
    <original>SAISA</original>
    <variation>T</variation>
    <location>
        <begin position="90"/>
        <end position="94"/>
    </location>
</feature>
<feature type="sequence conflict" description="In Ref. 2; AAW81036." evidence="5" ref="2">
    <original>T</original>
    <variation>A</variation>
    <location>
        <position position="140"/>
    </location>
</feature>
<sequence length="223" mass="24819">MKTLGVLFIAAWFIACTHSFPGAHDEDSKEERKNVDTVLVLPSIERDQMMAATFDFPSLSFEDSDEGSNWNWNTLLRPNFLDGWYQTLQSAISAHMKKVREQMAGILSRIPEQGVVNWNKIPEGANTTSTTKIIDGHVVTINETTYTDGSDDYSTLIRVRVIDVRPQNETILTTVSSEADSDVTTLPTLIGKNETSTQSSRSVESVEDFDNEIPKNQGDVLTA</sequence>
<dbReference type="EMBL" id="AY897570">
    <property type="protein sequence ID" value="AAW81036.1"/>
    <property type="molecule type" value="mRNA"/>
</dbReference>
<dbReference type="EMBL" id="DQ485318">
    <property type="protein sequence ID" value="ABF21077.1"/>
    <property type="molecule type" value="mRNA"/>
</dbReference>
<dbReference type="EMBL" id="DQ485319">
    <property type="protein sequence ID" value="ABF21078.1"/>
    <property type="molecule type" value="mRNA"/>
</dbReference>
<dbReference type="KEGG" id="ame:503505"/>
<dbReference type="GO" id="GO:0005576">
    <property type="term" value="C:extracellular region"/>
    <property type="evidence" value="ECO:0007669"/>
    <property type="project" value="UniProtKB-SubCell"/>
</dbReference>
<keyword id="KW-0020">Allergen</keyword>
<keyword id="KW-0025">Alternative splicing</keyword>
<keyword id="KW-0903">Direct protein sequencing</keyword>
<keyword id="KW-0325">Glycoprotein</keyword>
<keyword id="KW-0964">Secreted</keyword>
<keyword id="KW-0732">Signal</keyword>
<comment type="subcellular location">
    <subcellularLocation>
        <location evidence="3 4">Secreted</location>
    </subcellularLocation>
</comment>
<comment type="alternative products">
    <event type="alternative splicing"/>
    <isoform>
        <id>Q5EF78-1</id>
        <name>variant 1</name>
        <sequence type="displayed"/>
    </isoform>
    <isoform>
        <id>Q5EF78-2</id>
        <name>variant 2</name>
        <sequence type="described" ref="VSP_040198"/>
    </isoform>
</comment>
<comment type="tissue specificity">
    <text evidence="4">Expressed by the venom duct.</text>
</comment>
<comment type="allergen">
    <text>Causes an allergic reaction in human.</text>
</comment>
<comment type="miscellaneous">
    <molecule>Isoform variant 2</molecule>
    <text evidence="5">Fragment, sequence of 45-223.</text>
</comment>
<comment type="caution">
    <text evidence="5">Sequences and experimental results obtained from PubMed:16112630 and PubMed:16914147 are obtained from A.mellifera carnica and not A.mellifera.</text>
</comment>
<evidence type="ECO:0000255" key="1"/>
<evidence type="ECO:0000256" key="2">
    <source>
        <dbReference type="SAM" id="MobiDB-lite"/>
    </source>
</evidence>
<evidence type="ECO:0000269" key="3">
    <source>
    </source>
</evidence>
<evidence type="ECO:0000269" key="4">
    <source>
    </source>
</evidence>
<evidence type="ECO:0000305" key="5"/>
<reference key="1">
    <citation type="journal article" date="2005" name="Biochim. Biophys. Acta">
        <title>The protein composition of honeybee venom reconsidered by a proteomic approach.</title>
        <authorList>
            <person name="Peiren N."/>
            <person name="Vanrobaeys F."/>
            <person name="de Graaf D.C."/>
            <person name="Devreese B."/>
            <person name="Van Beeumen J."/>
            <person name="Jacobs F.J."/>
        </authorList>
    </citation>
    <scope>NUCLEOTIDE SEQUENCE [MRNA]</scope>
    <scope>PROTEIN SEQUENCE OF 33-46 AND 99-109</scope>
    <scope>SUBCELLULAR LOCATION</scope>
    <scope>TISSUE SPECIFICITY (ISOFORM VARIANT 1)</scope>
    <source>
        <tissue>Venom</tissue>
        <tissue>Venom duct</tissue>
    </source>
</reference>
<reference key="2">
    <citation type="journal article" date="2006" name="FEBS Lett.">
        <title>Molecular cloning and expression of icarapin, a novel IgE-binding bee venom protein.</title>
        <authorList>
            <person name="Peiren N."/>
            <person name="de Graaf D.C."/>
            <person name="Brunain M."/>
            <person name="Bridts C.H."/>
            <person name="Ebo D.G."/>
            <person name="Stevens W.J."/>
            <person name="Jacobs F.J."/>
        </authorList>
    </citation>
    <scope>NUCLEOTIDE SEQUENCE [MRNA]</scope>
    <scope>SUBCELLULAR LOCATION</scope>
    <scope>ALTERNATIVE SPLICING</scope>
    <scope>TISSUE SPECIFICITY</scope>
    <scope>ALLERGEN (ISOFORMS VARIANT 1 AND VARIANT 2)</scope>
    <source>
        <tissue>Venom duct</tissue>
    </source>
</reference>
<name>ICA_APICA</name>
<organism>
    <name type="scientific">Apis mellifera carnica</name>
    <name type="common">Carniolan honeybee</name>
    <dbReference type="NCBI Taxonomy" id="88217"/>
    <lineage>
        <taxon>Eukaryota</taxon>
        <taxon>Metazoa</taxon>
        <taxon>Ecdysozoa</taxon>
        <taxon>Arthropoda</taxon>
        <taxon>Hexapoda</taxon>
        <taxon>Insecta</taxon>
        <taxon>Pterygota</taxon>
        <taxon>Neoptera</taxon>
        <taxon>Endopterygota</taxon>
        <taxon>Hymenoptera</taxon>
        <taxon>Apocrita</taxon>
        <taxon>Aculeata</taxon>
        <taxon>Apoidea</taxon>
        <taxon>Anthophila</taxon>
        <taxon>Apidae</taxon>
        <taxon>Apis</taxon>
    </lineage>
</organism>
<accession>Q5EF78</accession>
<accession>Q1HHN7</accession>
<protein>
    <recommendedName>
        <fullName>Icarapin</fullName>
    </recommendedName>
    <alternativeName>
        <fullName>Venom protein 2</fullName>
    </alternativeName>
    <allergenName>Api m 10</allergenName>
</protein>